<feature type="chain" id="PRO_1000149841" description="tRNA pseudouridine synthase D">
    <location>
        <begin position="1"/>
        <end position="336"/>
    </location>
</feature>
<feature type="domain" description="TRUD" evidence="1">
    <location>
        <begin position="164"/>
        <end position="298"/>
    </location>
</feature>
<feature type="active site" description="Nucleophile" evidence="1">
    <location>
        <position position="84"/>
    </location>
</feature>
<accession>B3PJA9</accession>
<dbReference type="EC" id="5.4.99.27" evidence="1"/>
<dbReference type="EMBL" id="CP000934">
    <property type="protein sequence ID" value="ACE84664.1"/>
    <property type="molecule type" value="Genomic_DNA"/>
</dbReference>
<dbReference type="RefSeq" id="WP_012487821.1">
    <property type="nucleotide sequence ID" value="NC_010995.1"/>
</dbReference>
<dbReference type="SMR" id="B3PJA9"/>
<dbReference type="STRING" id="498211.CJA_2221"/>
<dbReference type="KEGG" id="cja:CJA_2221"/>
<dbReference type="eggNOG" id="COG0585">
    <property type="taxonomic scope" value="Bacteria"/>
</dbReference>
<dbReference type="HOGENOM" id="CLU_005281_4_0_6"/>
<dbReference type="OrthoDB" id="1550679at2"/>
<dbReference type="Proteomes" id="UP000001036">
    <property type="component" value="Chromosome"/>
</dbReference>
<dbReference type="GO" id="GO:0005829">
    <property type="term" value="C:cytosol"/>
    <property type="evidence" value="ECO:0007669"/>
    <property type="project" value="TreeGrafter"/>
</dbReference>
<dbReference type="GO" id="GO:0003723">
    <property type="term" value="F:RNA binding"/>
    <property type="evidence" value="ECO:0007669"/>
    <property type="project" value="InterPro"/>
</dbReference>
<dbReference type="GO" id="GO:0160150">
    <property type="term" value="F:tRNA pseudouridine(13) synthase activity"/>
    <property type="evidence" value="ECO:0007669"/>
    <property type="project" value="UniProtKB-EC"/>
</dbReference>
<dbReference type="GO" id="GO:0031119">
    <property type="term" value="P:tRNA pseudouridine synthesis"/>
    <property type="evidence" value="ECO:0007669"/>
    <property type="project" value="UniProtKB-UniRule"/>
</dbReference>
<dbReference type="CDD" id="cd02575">
    <property type="entry name" value="PseudoU_synth_EcTruD"/>
    <property type="match status" value="1"/>
</dbReference>
<dbReference type="Gene3D" id="3.30.2350.20">
    <property type="entry name" value="TruD, catalytic domain"/>
    <property type="match status" value="2"/>
</dbReference>
<dbReference type="HAMAP" id="MF_01082">
    <property type="entry name" value="TruD"/>
    <property type="match status" value="1"/>
</dbReference>
<dbReference type="InterPro" id="IPR020103">
    <property type="entry name" value="PsdUridine_synth_cat_dom_sf"/>
</dbReference>
<dbReference type="InterPro" id="IPR001656">
    <property type="entry name" value="PsdUridine_synth_TruD"/>
</dbReference>
<dbReference type="InterPro" id="IPR020119">
    <property type="entry name" value="PsdUridine_synth_TruD_CS"/>
</dbReference>
<dbReference type="InterPro" id="IPR011760">
    <property type="entry name" value="PsdUridine_synth_TruD_insert"/>
</dbReference>
<dbReference type="InterPro" id="IPR042214">
    <property type="entry name" value="TruD_catalytic"/>
</dbReference>
<dbReference type="InterPro" id="IPR050170">
    <property type="entry name" value="TruD_pseudoU_synthase"/>
</dbReference>
<dbReference type="PANTHER" id="PTHR47811">
    <property type="entry name" value="TRNA PSEUDOURIDINE SYNTHASE D"/>
    <property type="match status" value="1"/>
</dbReference>
<dbReference type="PANTHER" id="PTHR47811:SF1">
    <property type="entry name" value="TRNA PSEUDOURIDINE SYNTHASE D"/>
    <property type="match status" value="1"/>
</dbReference>
<dbReference type="Pfam" id="PF01142">
    <property type="entry name" value="TruD"/>
    <property type="match status" value="1"/>
</dbReference>
<dbReference type="SUPFAM" id="SSF55120">
    <property type="entry name" value="Pseudouridine synthase"/>
    <property type="match status" value="1"/>
</dbReference>
<dbReference type="PROSITE" id="PS50984">
    <property type="entry name" value="TRUD"/>
    <property type="match status" value="1"/>
</dbReference>
<dbReference type="PROSITE" id="PS01268">
    <property type="entry name" value="UPF0024"/>
    <property type="match status" value="1"/>
</dbReference>
<comment type="function">
    <text evidence="1">Responsible for synthesis of pseudouridine from uracil-13 in transfer RNAs.</text>
</comment>
<comment type="catalytic activity">
    <reaction evidence="1">
        <text>uridine(13) in tRNA = pseudouridine(13) in tRNA</text>
        <dbReference type="Rhea" id="RHEA:42540"/>
        <dbReference type="Rhea" id="RHEA-COMP:10105"/>
        <dbReference type="Rhea" id="RHEA-COMP:10106"/>
        <dbReference type="ChEBI" id="CHEBI:65314"/>
        <dbReference type="ChEBI" id="CHEBI:65315"/>
        <dbReference type="EC" id="5.4.99.27"/>
    </reaction>
</comment>
<comment type="similarity">
    <text evidence="1">Belongs to the pseudouridine synthase TruD family.</text>
</comment>
<reference key="1">
    <citation type="journal article" date="2008" name="J. Bacteriol.">
        <title>Insights into plant cell wall degradation from the genome sequence of the soil bacterium Cellvibrio japonicus.</title>
        <authorList>
            <person name="DeBoy R.T."/>
            <person name="Mongodin E.F."/>
            <person name="Fouts D.E."/>
            <person name="Tailford L.E."/>
            <person name="Khouri H."/>
            <person name="Emerson J.B."/>
            <person name="Mohamoud Y."/>
            <person name="Watkins K."/>
            <person name="Henrissat B."/>
            <person name="Gilbert H.J."/>
            <person name="Nelson K.E."/>
        </authorList>
    </citation>
    <scope>NUCLEOTIDE SEQUENCE [LARGE SCALE GENOMIC DNA]</scope>
    <source>
        <strain>Ueda107</strain>
    </source>
</reference>
<organism>
    <name type="scientific">Cellvibrio japonicus (strain Ueda107)</name>
    <name type="common">Pseudomonas fluorescens subsp. cellulosa</name>
    <dbReference type="NCBI Taxonomy" id="498211"/>
    <lineage>
        <taxon>Bacteria</taxon>
        <taxon>Pseudomonadati</taxon>
        <taxon>Pseudomonadota</taxon>
        <taxon>Gammaproteobacteria</taxon>
        <taxon>Cellvibrionales</taxon>
        <taxon>Cellvibrionaceae</taxon>
        <taxon>Cellvibrio</taxon>
    </lineage>
</organism>
<gene>
    <name evidence="1" type="primary">truD</name>
    <name type="ordered locus">CJA_2221</name>
</gene>
<protein>
    <recommendedName>
        <fullName evidence="1">tRNA pseudouridine synthase D</fullName>
        <ecNumber evidence="1">5.4.99.27</ecNumber>
    </recommendedName>
    <alternativeName>
        <fullName evidence="1">tRNA pseudouridine(13) synthase</fullName>
    </alternativeName>
    <alternativeName>
        <fullName evidence="1">tRNA pseudouridylate synthase D</fullName>
    </alternativeName>
    <alternativeName>
        <fullName evidence="1">tRNA-uridine isomerase D</fullName>
    </alternativeName>
</protein>
<keyword id="KW-0413">Isomerase</keyword>
<keyword id="KW-1185">Reference proteome</keyword>
<keyword id="KW-0819">tRNA processing</keyword>
<evidence type="ECO:0000255" key="1">
    <source>
        <dbReference type="HAMAP-Rule" id="MF_01082"/>
    </source>
</evidence>
<sequence length="336" mass="38220">MRIQADFSLDFPRAYGTLEASADFRTVPEDFQVTENLGFEPAGEGEHVYLWIEKRGENTAWVAEQLAVYAGVKPTDIGYAGRKDRHAITRQWFSVYLPLKSNHPEPEWQGFSSDRIQVLRVARHVRKLRRGEHESNHFVIGLRQLQCADKTAFHERLDCVLRSGVPNYFGEQRFGNAGRNLIEAESLLVGKKPYRDRQKRGLILSAARSYLFNQVLADRVRKGDWQISVAGEPCAYPSGPLWGRGRPLALVELLARETELLSSWRDWCNELEHVGTSQERRALLLAIKTPSYRWLVGDHLELAFTLEAGAFATSVLRELVSLNNQQLRLSGTESSD</sequence>
<proteinExistence type="inferred from homology"/>
<name>TRUD_CELJU</name>